<evidence type="ECO:0000250" key="1"/>
<evidence type="ECO:0000255" key="2">
    <source>
        <dbReference type="PROSITE-ProRule" id="PRU00066"/>
    </source>
</evidence>
<evidence type="ECO:0000256" key="3">
    <source>
        <dbReference type="SAM" id="MobiDB-lite"/>
    </source>
</evidence>
<evidence type="ECO:0000305" key="4"/>
<reference key="1">
    <citation type="journal article" date="2004" name="Science">
        <title>The Ashbya gossypii genome as a tool for mapping the ancient Saccharomyces cerevisiae genome.</title>
        <authorList>
            <person name="Dietrich F.S."/>
            <person name="Voegeli S."/>
            <person name="Brachat S."/>
            <person name="Lerch A."/>
            <person name="Gates K."/>
            <person name="Steiner S."/>
            <person name="Mohr C."/>
            <person name="Poehlmann R."/>
            <person name="Luedi P."/>
            <person name="Choi S."/>
            <person name="Wing R.A."/>
            <person name="Flavier A."/>
            <person name="Gaffney T.D."/>
            <person name="Philippsen P."/>
        </authorList>
    </citation>
    <scope>NUCLEOTIDE SEQUENCE [LARGE SCALE GENOMIC DNA]</scope>
    <source>
        <strain>ATCC 10895 / CBS 109.51 / FGSC 9923 / NRRL Y-1056</strain>
    </source>
</reference>
<reference key="2">
    <citation type="journal article" date="2013" name="G3 (Bethesda)">
        <title>Genomes of Ashbya fungi isolated from insects reveal four mating-type loci, numerous translocations, lack of transposons, and distinct gene duplications.</title>
        <authorList>
            <person name="Dietrich F.S."/>
            <person name="Voegeli S."/>
            <person name="Kuo S."/>
            <person name="Philippsen P."/>
        </authorList>
    </citation>
    <scope>GENOME REANNOTATION</scope>
    <scope>SEQUENCE REVISION TO 1026</scope>
    <source>
        <strain>ATCC 10895 / CBS 109.51 / FGSC 9923 / NRRL Y-1056</strain>
    </source>
</reference>
<gene>
    <name type="primary">IML1</name>
    <name type="ordered locus">ABL079C</name>
</gene>
<proteinExistence type="inferred from homology"/>
<organism>
    <name type="scientific">Eremothecium gossypii (strain ATCC 10895 / CBS 109.51 / FGSC 9923 / NRRL Y-1056)</name>
    <name type="common">Yeast</name>
    <name type="synonym">Ashbya gossypii</name>
    <dbReference type="NCBI Taxonomy" id="284811"/>
    <lineage>
        <taxon>Eukaryota</taxon>
        <taxon>Fungi</taxon>
        <taxon>Dikarya</taxon>
        <taxon>Ascomycota</taxon>
        <taxon>Saccharomycotina</taxon>
        <taxon>Saccharomycetes</taxon>
        <taxon>Saccharomycetales</taxon>
        <taxon>Saccharomycetaceae</taxon>
        <taxon>Eremothecium</taxon>
    </lineage>
</organism>
<protein>
    <recommendedName>
        <fullName>Vacuolar membrane-associated protein IML1</fullName>
    </recommendedName>
</protein>
<sequence length="1534" mass="175141">MQSNLLQFSNLRTGNLRLASTNRGSANGGGSSTMESGTSGAGSSSNKQVNMVIENNTLTIGGTEGKRAFGRRLQMDTSGLKVKSKVDQEELESAMKTPISGIPFFNQSSRRSYQFELSFHNTPVSDDCHVLIDVSQLPGAREGDLAELRTYHRSPGTRDKKVYFKIKSLDVEARRRSATTGLSILTGQLRYLLDLPSRSPVWVKLKSKNEHQADLVELHVKDCHVNRGDMWCISSTLLDTCVFTGQRVTYINALRLIVKAIYRNGKKVISGYVGNNTKVIFASESARIIFLIQITEEMWHFEQNGEKTFHKVVNSLFPRILKRWKDIGTYHTITIVFCASVDESGQSFRNIPPGVRLKNTKDYFRIVVDRVNILYWDEIMKTLRKEFMQIIGDLRNTQTDDGGGPIRWSFTPVIKSNILETINFATTLLADQFRVPDLKHTVTHVIIISPGTGLYDVNYDLLKVTCRKLLSLEIAVDLICLSRAPLHIVPLFRYIDYQGELCHSAPTWLSISFWDDNKKSQEWHPRCKIYDVQMMGVTERRDSEEVTLNYMNSALHTTSVTDFMDQYDKEVFDADKCYPLSNENRESTPLEDTSNIESTVLPKSGHEVQSIVWKPPRSSKPLVEPTTVQSVIVSLHQPGTINNSSEDDLTDTSSSNSSPEANESLALASLKNMTQISRGLTKRIVSKLIPDIKSKRSRHSIMATGNEHPRNDTYEDIEDIRKVDCHSTGTNITFLKPTFRSMDAEHYNPPDTVSSHGSAGTDSRRESLMFEKKSVLLDDFAKKKSNVNKYIKEKSLVDSLIHLDNPSVCFSGEVATMLIPDRWKDVYPKYVAKKYTKWRSFTTPAELPITTVHFPSLSDFESNFIFRNHSVSLNIDREVYGQTTFDLLRDMIYIRLLAGFQICTSELLKKVEATGSNEIHEQEIAKVLSKDNYMVAIYYMIIDNEVHRIKCGYNGTIDVQRFLRKNENKMMDTIAKYTPLVRTRYEHSYRPCKMDPLRISRTSLRWNQVDQILAGYYDSMMDSSKIGFRSKFVILPADIPPNTFSSTVNGRKETLSAEEIRLEGLRKLISSISKSRLRTNPEKATKASRKEEILPEVHFYTGSLFEYLADHHDNLEHVDSPAKDAQSADLSKFNRDAELSRLAYELQHGEKPIKLTNRKWHFKNHSSCFVGLEMVNWLIENFSDIDTRDEAVIYGQQLLTDGLFHHVDRRHGFLDGHYFYRISDPFVDIKIEKGSAESPLNSDPITINRRVSASTIISSKQNSSGMIQSKNGDSELLDRQSVNDEGKTIVISTAIDIDLDPAGNSHKLETCTVHYDQVHNPDHCFHIRIEWLTATPKLLDDLVTNWGRLCERYGLRLVEIPWHELCTIPSFDPTHSFIEATLAINPWTDPEFMDAEIFASQKYFYHVHLLESFGFLLDNRASRILQNERVSFNVVYSWGKPSFKYAQFIHNTGAYMAEIRENGDLFLAPNNLYLSRNGIGNSSGSLHLGPKSAIYSEKVMLDFKHVCEDYKKLRSVFWEARDKWQQTRNTLEEY</sequence>
<accession>Q75DV2</accession>
<feature type="chain" id="PRO_0000301761" description="Vacuolar membrane-associated protein IML1">
    <location>
        <begin position="1"/>
        <end position="1534"/>
    </location>
</feature>
<feature type="domain" description="DEP" evidence="2">
    <location>
        <begin position="1149"/>
        <end position="1224"/>
    </location>
</feature>
<feature type="region of interest" description="Disordered" evidence="3">
    <location>
        <begin position="19"/>
        <end position="48"/>
    </location>
</feature>
<feature type="region of interest" description="Disordered" evidence="3">
    <location>
        <begin position="580"/>
        <end position="601"/>
    </location>
</feature>
<feature type="region of interest" description="Disordered" evidence="3">
    <location>
        <begin position="637"/>
        <end position="662"/>
    </location>
</feature>
<feature type="compositionally biased region" description="Low complexity" evidence="3">
    <location>
        <begin position="32"/>
        <end position="45"/>
    </location>
</feature>
<feature type="compositionally biased region" description="Low complexity" evidence="3">
    <location>
        <begin position="651"/>
        <end position="662"/>
    </location>
</feature>
<comment type="subcellular location">
    <subcellularLocation>
        <location evidence="1">Vacuole membrane</location>
        <topology evidence="1">Peripheral membrane protein</topology>
    </subcellularLocation>
</comment>
<comment type="similarity">
    <text evidence="4">Belongs to the IML1 family.</text>
</comment>
<name>IML1_EREGS</name>
<keyword id="KW-0472">Membrane</keyword>
<keyword id="KW-1185">Reference proteome</keyword>
<keyword id="KW-0926">Vacuole</keyword>
<dbReference type="EMBL" id="AE016815">
    <property type="protein sequence ID" value="AAS50692.2"/>
    <property type="molecule type" value="Genomic_DNA"/>
</dbReference>
<dbReference type="RefSeq" id="NP_982868.2">
    <property type="nucleotide sequence ID" value="NM_208221.2"/>
</dbReference>
<dbReference type="SMR" id="Q75DV2"/>
<dbReference type="FunCoup" id="Q75DV2">
    <property type="interactions" value="733"/>
</dbReference>
<dbReference type="STRING" id="284811.Q75DV2"/>
<dbReference type="EnsemblFungi" id="AAS50692">
    <property type="protein sequence ID" value="AAS50692"/>
    <property type="gene ID" value="AGOS_ABL079C"/>
</dbReference>
<dbReference type="GeneID" id="4618949"/>
<dbReference type="KEGG" id="ago:AGOS_ABL079C"/>
<dbReference type="eggNOG" id="KOG3572">
    <property type="taxonomic scope" value="Eukaryota"/>
</dbReference>
<dbReference type="HOGENOM" id="CLU_000935_1_1_1"/>
<dbReference type="InParanoid" id="Q75DV2"/>
<dbReference type="OMA" id="RTWHFKR"/>
<dbReference type="OrthoDB" id="39497at2759"/>
<dbReference type="Proteomes" id="UP000000591">
    <property type="component" value="Chromosome II"/>
</dbReference>
<dbReference type="GO" id="GO:1990130">
    <property type="term" value="C:GATOR1 complex"/>
    <property type="evidence" value="ECO:0000318"/>
    <property type="project" value="GO_Central"/>
</dbReference>
<dbReference type="GO" id="GO:0005774">
    <property type="term" value="C:vacuolar membrane"/>
    <property type="evidence" value="ECO:0007669"/>
    <property type="project" value="UniProtKB-SubCell"/>
</dbReference>
<dbReference type="GO" id="GO:0005096">
    <property type="term" value="F:GTPase activator activity"/>
    <property type="evidence" value="ECO:0007669"/>
    <property type="project" value="EnsemblFungi"/>
</dbReference>
<dbReference type="GO" id="GO:0006995">
    <property type="term" value="P:cellular response to nitrogen starvation"/>
    <property type="evidence" value="ECO:0007669"/>
    <property type="project" value="EnsemblFungi"/>
</dbReference>
<dbReference type="GO" id="GO:0034599">
    <property type="term" value="P:cellular response to oxidative stress"/>
    <property type="evidence" value="ECO:0007669"/>
    <property type="project" value="EnsemblFungi"/>
</dbReference>
<dbReference type="GO" id="GO:0035556">
    <property type="term" value="P:intracellular signal transduction"/>
    <property type="evidence" value="ECO:0007669"/>
    <property type="project" value="InterPro"/>
</dbReference>
<dbReference type="GO" id="GO:0051058">
    <property type="term" value="P:negative regulation of small GTPase mediated signal transduction"/>
    <property type="evidence" value="ECO:0007669"/>
    <property type="project" value="EnsemblFungi"/>
</dbReference>
<dbReference type="GO" id="GO:1904262">
    <property type="term" value="P:negative regulation of TORC1 signaling"/>
    <property type="evidence" value="ECO:0000318"/>
    <property type="project" value="GO_Central"/>
</dbReference>
<dbReference type="GO" id="GO:0010508">
    <property type="term" value="P:positive regulation of autophagy"/>
    <property type="evidence" value="ECO:0000318"/>
    <property type="project" value="GO_Central"/>
</dbReference>
<dbReference type="GO" id="GO:2000785">
    <property type="term" value="P:regulation of autophagosome assembly"/>
    <property type="evidence" value="ECO:0007669"/>
    <property type="project" value="EnsemblFungi"/>
</dbReference>
<dbReference type="CDD" id="cd04449">
    <property type="entry name" value="DEP_DEPDC5-like"/>
    <property type="match status" value="1"/>
</dbReference>
<dbReference type="FunFam" id="1.10.10.10:FF:000707">
    <property type="entry name" value="Vacuolar membrane-associated protein iml1"/>
    <property type="match status" value="1"/>
</dbReference>
<dbReference type="Gene3D" id="1.10.10.10">
    <property type="entry name" value="Winged helix-like DNA-binding domain superfamily/Winged helix DNA-binding domain"/>
    <property type="match status" value="1"/>
</dbReference>
<dbReference type="InterPro" id="IPR000591">
    <property type="entry name" value="DEP_dom"/>
</dbReference>
<dbReference type="InterPro" id="IPR045838">
    <property type="entry name" value="DEPDC5_CTD"/>
</dbReference>
<dbReference type="InterPro" id="IPR027244">
    <property type="entry name" value="IML1"/>
</dbReference>
<dbReference type="InterPro" id="IPR048255">
    <property type="entry name" value="IML1_N"/>
</dbReference>
<dbReference type="InterPro" id="IPR036388">
    <property type="entry name" value="WH-like_DNA-bd_sf"/>
</dbReference>
<dbReference type="InterPro" id="IPR036390">
    <property type="entry name" value="WH_DNA-bd_sf"/>
</dbReference>
<dbReference type="PANTHER" id="PTHR13179">
    <property type="entry name" value="DEP DOMAIN CONTAINING PROTEIN 5"/>
    <property type="match status" value="1"/>
</dbReference>
<dbReference type="PANTHER" id="PTHR13179:SF8">
    <property type="entry name" value="GATOR COMPLEX PROTEIN DEPDC5"/>
    <property type="match status" value="1"/>
</dbReference>
<dbReference type="Pfam" id="PF00610">
    <property type="entry name" value="DEP"/>
    <property type="match status" value="1"/>
</dbReference>
<dbReference type="Pfam" id="PF19418">
    <property type="entry name" value="DEPDC5_CTD"/>
    <property type="match status" value="1"/>
</dbReference>
<dbReference type="Pfam" id="PF12257">
    <property type="entry name" value="IML1"/>
    <property type="match status" value="1"/>
</dbReference>
<dbReference type="SMART" id="SM00049">
    <property type="entry name" value="DEP"/>
    <property type="match status" value="1"/>
</dbReference>
<dbReference type="SUPFAM" id="SSF46785">
    <property type="entry name" value="Winged helix' DNA-binding domain"/>
    <property type="match status" value="1"/>
</dbReference>
<dbReference type="PROSITE" id="PS50186">
    <property type="entry name" value="DEP"/>
    <property type="match status" value="1"/>
</dbReference>